<comment type="function">
    <text evidence="1">Catalyzes the ATP-dependent amidation of deamido-NAD to form NAD. Uses ammonia as a nitrogen source.</text>
</comment>
<comment type="catalytic activity">
    <reaction evidence="1">
        <text>deamido-NAD(+) + NH4(+) + ATP = AMP + diphosphate + NAD(+) + H(+)</text>
        <dbReference type="Rhea" id="RHEA:21188"/>
        <dbReference type="ChEBI" id="CHEBI:15378"/>
        <dbReference type="ChEBI" id="CHEBI:28938"/>
        <dbReference type="ChEBI" id="CHEBI:30616"/>
        <dbReference type="ChEBI" id="CHEBI:33019"/>
        <dbReference type="ChEBI" id="CHEBI:57540"/>
        <dbReference type="ChEBI" id="CHEBI:58437"/>
        <dbReference type="ChEBI" id="CHEBI:456215"/>
        <dbReference type="EC" id="6.3.1.5"/>
    </reaction>
</comment>
<comment type="pathway">
    <text evidence="1">Cofactor biosynthesis; NAD(+) biosynthesis; NAD(+) from deamido-NAD(+) (ammonia route): step 1/1.</text>
</comment>
<comment type="subunit">
    <text evidence="1">Homodimer.</text>
</comment>
<comment type="similarity">
    <text evidence="1">Belongs to the NAD synthetase family.</text>
</comment>
<accession>A4VKK4</accession>
<reference key="1">
    <citation type="journal article" date="2008" name="Proc. Natl. Acad. Sci. U.S.A.">
        <title>Nitrogen fixation island and rhizosphere competence traits in the genome of root-associated Pseudomonas stutzeri A1501.</title>
        <authorList>
            <person name="Yan Y."/>
            <person name="Yang J."/>
            <person name="Dou Y."/>
            <person name="Chen M."/>
            <person name="Ping S."/>
            <person name="Peng J."/>
            <person name="Lu W."/>
            <person name="Zhang W."/>
            <person name="Yao Z."/>
            <person name="Li H."/>
            <person name="Liu W."/>
            <person name="He S."/>
            <person name="Geng L."/>
            <person name="Zhang X."/>
            <person name="Yang F."/>
            <person name="Yu H."/>
            <person name="Zhan Y."/>
            <person name="Li D."/>
            <person name="Lin Z."/>
            <person name="Wang Y."/>
            <person name="Elmerich C."/>
            <person name="Lin M."/>
            <person name="Jin Q."/>
        </authorList>
    </citation>
    <scope>NUCLEOTIDE SEQUENCE [LARGE SCALE GENOMIC DNA]</scope>
    <source>
        <strain>A1501</strain>
    </source>
</reference>
<dbReference type="EC" id="6.3.1.5" evidence="1"/>
<dbReference type="EMBL" id="CP000304">
    <property type="protein sequence ID" value="ABP79505.1"/>
    <property type="molecule type" value="Genomic_DNA"/>
</dbReference>
<dbReference type="RefSeq" id="WP_011912982.1">
    <property type="nucleotide sequence ID" value="NC_009434.1"/>
</dbReference>
<dbReference type="SMR" id="A4VKK4"/>
<dbReference type="KEGG" id="psa:PST_1831"/>
<dbReference type="eggNOG" id="COG0171">
    <property type="taxonomic scope" value="Bacteria"/>
</dbReference>
<dbReference type="HOGENOM" id="CLU_059327_3_0_6"/>
<dbReference type="UniPathway" id="UPA00253">
    <property type="reaction ID" value="UER00333"/>
</dbReference>
<dbReference type="Proteomes" id="UP000000233">
    <property type="component" value="Chromosome"/>
</dbReference>
<dbReference type="GO" id="GO:0005737">
    <property type="term" value="C:cytoplasm"/>
    <property type="evidence" value="ECO:0007669"/>
    <property type="project" value="InterPro"/>
</dbReference>
<dbReference type="GO" id="GO:0005524">
    <property type="term" value="F:ATP binding"/>
    <property type="evidence" value="ECO:0007669"/>
    <property type="project" value="UniProtKB-UniRule"/>
</dbReference>
<dbReference type="GO" id="GO:0004359">
    <property type="term" value="F:glutaminase activity"/>
    <property type="evidence" value="ECO:0007669"/>
    <property type="project" value="InterPro"/>
</dbReference>
<dbReference type="GO" id="GO:0046872">
    <property type="term" value="F:metal ion binding"/>
    <property type="evidence" value="ECO:0007669"/>
    <property type="project" value="UniProtKB-KW"/>
</dbReference>
<dbReference type="GO" id="GO:0003952">
    <property type="term" value="F:NAD+ synthase (glutamine-hydrolyzing) activity"/>
    <property type="evidence" value="ECO:0007669"/>
    <property type="project" value="InterPro"/>
</dbReference>
<dbReference type="GO" id="GO:0008795">
    <property type="term" value="F:NAD+ synthase activity"/>
    <property type="evidence" value="ECO:0007669"/>
    <property type="project" value="UniProtKB-UniRule"/>
</dbReference>
<dbReference type="GO" id="GO:0009435">
    <property type="term" value="P:NAD biosynthetic process"/>
    <property type="evidence" value="ECO:0007669"/>
    <property type="project" value="UniProtKB-UniRule"/>
</dbReference>
<dbReference type="CDD" id="cd00553">
    <property type="entry name" value="NAD_synthase"/>
    <property type="match status" value="1"/>
</dbReference>
<dbReference type="Gene3D" id="3.40.50.620">
    <property type="entry name" value="HUPs"/>
    <property type="match status" value="1"/>
</dbReference>
<dbReference type="HAMAP" id="MF_00193">
    <property type="entry name" value="NadE_ammonia_dep"/>
    <property type="match status" value="1"/>
</dbReference>
<dbReference type="InterPro" id="IPR022310">
    <property type="entry name" value="NAD/GMP_synthase"/>
</dbReference>
<dbReference type="InterPro" id="IPR003694">
    <property type="entry name" value="NAD_synthase"/>
</dbReference>
<dbReference type="InterPro" id="IPR022926">
    <property type="entry name" value="NH(3)-dep_NAD(+)_synth"/>
</dbReference>
<dbReference type="InterPro" id="IPR014729">
    <property type="entry name" value="Rossmann-like_a/b/a_fold"/>
</dbReference>
<dbReference type="NCBIfam" id="TIGR00552">
    <property type="entry name" value="nadE"/>
    <property type="match status" value="1"/>
</dbReference>
<dbReference type="NCBIfam" id="NF001979">
    <property type="entry name" value="PRK00768.1"/>
    <property type="match status" value="1"/>
</dbReference>
<dbReference type="PANTHER" id="PTHR23090">
    <property type="entry name" value="NH 3 /GLUTAMINE-DEPENDENT NAD + SYNTHETASE"/>
    <property type="match status" value="1"/>
</dbReference>
<dbReference type="PANTHER" id="PTHR23090:SF7">
    <property type="entry name" value="NH(3)-DEPENDENT NAD(+) SYNTHETASE"/>
    <property type="match status" value="1"/>
</dbReference>
<dbReference type="Pfam" id="PF02540">
    <property type="entry name" value="NAD_synthase"/>
    <property type="match status" value="1"/>
</dbReference>
<dbReference type="SUPFAM" id="SSF52402">
    <property type="entry name" value="Adenine nucleotide alpha hydrolases-like"/>
    <property type="match status" value="1"/>
</dbReference>
<organism>
    <name type="scientific">Stutzerimonas stutzeri (strain A1501)</name>
    <name type="common">Pseudomonas stutzeri</name>
    <dbReference type="NCBI Taxonomy" id="379731"/>
    <lineage>
        <taxon>Bacteria</taxon>
        <taxon>Pseudomonadati</taxon>
        <taxon>Pseudomonadota</taxon>
        <taxon>Gammaproteobacteria</taxon>
        <taxon>Pseudomonadales</taxon>
        <taxon>Pseudomonadaceae</taxon>
        <taxon>Stutzerimonas</taxon>
    </lineage>
</organism>
<name>NADE_STUS1</name>
<proteinExistence type="inferred from homology"/>
<sequence length="275" mass="29735">MHSRQQEIAVALHVCAPFTGPESVQTEIERRIRFIQSCLRESGMKTLVLGISGGVDSTTAGLLAQRAVEGMRAAGEGDHYRFIAVRLPYQVQHDEHEAQLAVDTIKPDECHTVNIGTAVLGLAAATEALEPLSPEQRDFVLGNTKARMRMVAQYTIANARQGLVIGTDHAAEAVMGFFTKFGDGACDLTPLAGLVKDQVRQIAAALGAPEQLVHKVPTADLEELSPGKPDEAAHGVSYRNIDDFLQGKPVPDEAAQIIVDTYDKTAHKRQLPKEP</sequence>
<evidence type="ECO:0000255" key="1">
    <source>
        <dbReference type="HAMAP-Rule" id="MF_00193"/>
    </source>
</evidence>
<gene>
    <name evidence="1" type="primary">nadE</name>
    <name type="ordered locus">PST_1831</name>
</gene>
<keyword id="KW-0067">ATP-binding</keyword>
<keyword id="KW-0436">Ligase</keyword>
<keyword id="KW-0460">Magnesium</keyword>
<keyword id="KW-0479">Metal-binding</keyword>
<keyword id="KW-0520">NAD</keyword>
<keyword id="KW-0547">Nucleotide-binding</keyword>
<keyword id="KW-1185">Reference proteome</keyword>
<feature type="chain" id="PRO_1000077590" description="NH(3)-dependent NAD(+) synthetase">
    <location>
        <begin position="1"/>
        <end position="275"/>
    </location>
</feature>
<feature type="binding site" evidence="1">
    <location>
        <begin position="50"/>
        <end position="57"/>
    </location>
    <ligand>
        <name>ATP</name>
        <dbReference type="ChEBI" id="CHEBI:30616"/>
    </ligand>
</feature>
<feature type="binding site" evidence="1">
    <location>
        <position position="56"/>
    </location>
    <ligand>
        <name>Mg(2+)</name>
        <dbReference type="ChEBI" id="CHEBI:18420"/>
    </ligand>
</feature>
<feature type="binding site" evidence="1">
    <location>
        <position position="147"/>
    </location>
    <ligand>
        <name>deamido-NAD(+)</name>
        <dbReference type="ChEBI" id="CHEBI:58437"/>
    </ligand>
</feature>
<feature type="binding site" evidence="1">
    <location>
        <position position="167"/>
    </location>
    <ligand>
        <name>ATP</name>
        <dbReference type="ChEBI" id="CHEBI:30616"/>
    </ligand>
</feature>
<feature type="binding site" evidence="1">
    <location>
        <position position="172"/>
    </location>
    <ligand>
        <name>Mg(2+)</name>
        <dbReference type="ChEBI" id="CHEBI:18420"/>
    </ligand>
</feature>
<feature type="binding site" evidence="1">
    <location>
        <position position="180"/>
    </location>
    <ligand>
        <name>deamido-NAD(+)</name>
        <dbReference type="ChEBI" id="CHEBI:58437"/>
    </ligand>
</feature>
<feature type="binding site" evidence="1">
    <location>
        <position position="187"/>
    </location>
    <ligand>
        <name>deamido-NAD(+)</name>
        <dbReference type="ChEBI" id="CHEBI:58437"/>
    </ligand>
</feature>
<feature type="binding site" evidence="1">
    <location>
        <position position="196"/>
    </location>
    <ligand>
        <name>ATP</name>
        <dbReference type="ChEBI" id="CHEBI:30616"/>
    </ligand>
</feature>
<feature type="binding site" evidence="1">
    <location>
        <position position="218"/>
    </location>
    <ligand>
        <name>ATP</name>
        <dbReference type="ChEBI" id="CHEBI:30616"/>
    </ligand>
</feature>
<feature type="binding site" evidence="1">
    <location>
        <begin position="267"/>
        <end position="268"/>
    </location>
    <ligand>
        <name>deamido-NAD(+)</name>
        <dbReference type="ChEBI" id="CHEBI:58437"/>
    </ligand>
</feature>
<protein>
    <recommendedName>
        <fullName evidence="1">NH(3)-dependent NAD(+) synthetase</fullName>
        <ecNumber evidence="1">6.3.1.5</ecNumber>
    </recommendedName>
</protein>